<protein>
    <recommendedName>
        <fullName evidence="1">Chromosome-anchoring protein RacA</fullName>
    </recommendedName>
</protein>
<proteinExistence type="inferred from homology"/>
<evidence type="ECO:0000255" key="1">
    <source>
        <dbReference type="HAMAP-Rule" id="MF_01170"/>
    </source>
</evidence>
<evidence type="ECO:0000256" key="2">
    <source>
        <dbReference type="SAM" id="MobiDB-lite"/>
    </source>
</evidence>
<dbReference type="EMBL" id="CP000002">
    <property type="protein sequence ID" value="AAU25390.1"/>
    <property type="molecule type" value="Genomic_DNA"/>
</dbReference>
<dbReference type="EMBL" id="AE017333">
    <property type="protein sequence ID" value="AAU42765.1"/>
    <property type="molecule type" value="Genomic_DNA"/>
</dbReference>
<dbReference type="RefSeq" id="WP_011198392.1">
    <property type="nucleotide sequence ID" value="NC_006322.1"/>
</dbReference>
<dbReference type="SMR" id="Q65DU9"/>
<dbReference type="STRING" id="279010.BL04032"/>
<dbReference type="GeneID" id="92859476"/>
<dbReference type="KEGG" id="bld:BLi03951"/>
<dbReference type="KEGG" id="bli:BL04032"/>
<dbReference type="PATRIC" id="fig|279010.13.peg.4020"/>
<dbReference type="eggNOG" id="COG0789">
    <property type="taxonomic scope" value="Bacteria"/>
</dbReference>
<dbReference type="HOGENOM" id="CLU_111022_0_0_9"/>
<dbReference type="Proteomes" id="UP000000606">
    <property type="component" value="Chromosome"/>
</dbReference>
<dbReference type="GO" id="GO:0005737">
    <property type="term" value="C:cytoplasm"/>
    <property type="evidence" value="ECO:0007669"/>
    <property type="project" value="UniProtKB-SubCell"/>
</dbReference>
<dbReference type="GO" id="GO:0003690">
    <property type="term" value="F:double-stranded DNA binding"/>
    <property type="evidence" value="ECO:0007669"/>
    <property type="project" value="UniProtKB-UniRule"/>
</dbReference>
<dbReference type="GO" id="GO:0008356">
    <property type="term" value="P:asymmetric cell division"/>
    <property type="evidence" value="ECO:0007669"/>
    <property type="project" value="UniProtKB-UniRule"/>
</dbReference>
<dbReference type="GO" id="GO:0030261">
    <property type="term" value="P:chromosome condensation"/>
    <property type="evidence" value="ECO:0007669"/>
    <property type="project" value="UniProtKB-UniRule"/>
</dbReference>
<dbReference type="GO" id="GO:0007059">
    <property type="term" value="P:chromosome segregation"/>
    <property type="evidence" value="ECO:0007669"/>
    <property type="project" value="UniProtKB-UniRule"/>
</dbReference>
<dbReference type="GO" id="GO:0006355">
    <property type="term" value="P:regulation of DNA-templated transcription"/>
    <property type="evidence" value="ECO:0007669"/>
    <property type="project" value="InterPro"/>
</dbReference>
<dbReference type="GO" id="GO:0030435">
    <property type="term" value="P:sporulation resulting in formation of a cellular spore"/>
    <property type="evidence" value="ECO:0007669"/>
    <property type="project" value="UniProtKB-UniRule"/>
</dbReference>
<dbReference type="CDD" id="cd04762">
    <property type="entry name" value="HTH_MerR-trunc"/>
    <property type="match status" value="1"/>
</dbReference>
<dbReference type="Gene3D" id="1.10.1660.10">
    <property type="match status" value="1"/>
</dbReference>
<dbReference type="HAMAP" id="MF_01170">
    <property type="entry name" value="RacA"/>
    <property type="match status" value="1"/>
</dbReference>
<dbReference type="InterPro" id="IPR023522">
    <property type="entry name" value="Chrosome_anchoring_RacA"/>
</dbReference>
<dbReference type="InterPro" id="IPR009061">
    <property type="entry name" value="DNA-bd_dom_put_sf"/>
</dbReference>
<dbReference type="InterPro" id="IPR000551">
    <property type="entry name" value="MerR-type_HTH_dom"/>
</dbReference>
<dbReference type="NCBIfam" id="NF009649">
    <property type="entry name" value="PRK13182.1-5"/>
    <property type="match status" value="1"/>
</dbReference>
<dbReference type="Pfam" id="PF13411">
    <property type="entry name" value="MerR_1"/>
    <property type="match status" value="1"/>
</dbReference>
<dbReference type="SUPFAM" id="SSF46955">
    <property type="entry name" value="Putative DNA-binding domain"/>
    <property type="match status" value="1"/>
</dbReference>
<sequence length="186" mass="22260">MNTADAANELGVSTKTVQRWVKQLQLPASRNELGHYFFTEDDIAILKEVKEQLKNGTPMQDVTVKRPKKTFFIKKNEMIQTKEPALQLNERLEERLQRFLEHEQLERELLQKKIAELERKLEQKADEVVSYQLLQQRRELEEERQQIKHLEQKISQLESMNRREKDTAVRREEKKPKSKLKSIFSF</sequence>
<organism>
    <name type="scientific">Bacillus licheniformis (strain ATCC 14580 / DSM 13 / JCM 2505 / CCUG 7422 / NBRC 12200 / NCIMB 9375 / NCTC 10341 / NRRL NRS-1264 / Gibson 46)</name>
    <dbReference type="NCBI Taxonomy" id="279010"/>
    <lineage>
        <taxon>Bacteria</taxon>
        <taxon>Bacillati</taxon>
        <taxon>Bacillota</taxon>
        <taxon>Bacilli</taxon>
        <taxon>Bacillales</taxon>
        <taxon>Bacillaceae</taxon>
        <taxon>Bacillus</taxon>
    </lineage>
</organism>
<keyword id="KW-0131">Cell cycle</keyword>
<keyword id="KW-0132">Cell division</keyword>
<keyword id="KW-0159">Chromosome partition</keyword>
<keyword id="KW-0175">Coiled coil</keyword>
<keyword id="KW-0963">Cytoplasm</keyword>
<keyword id="KW-0238">DNA-binding</keyword>
<keyword id="KW-1185">Reference proteome</keyword>
<keyword id="KW-0749">Sporulation</keyword>
<feature type="chain" id="PRO_0000224156" description="Chromosome-anchoring protein RacA">
    <location>
        <begin position="1"/>
        <end position="186"/>
    </location>
</feature>
<feature type="DNA-binding region" description="H-T-H motif" evidence="1">
    <location>
        <begin position="3"/>
        <end position="23"/>
    </location>
</feature>
<feature type="region of interest" description="Disordered" evidence="2">
    <location>
        <begin position="158"/>
        <end position="186"/>
    </location>
</feature>
<feature type="coiled-coil region" evidence="1">
    <location>
        <begin position="90"/>
        <end position="170"/>
    </location>
</feature>
<feature type="compositionally biased region" description="Basic and acidic residues" evidence="2">
    <location>
        <begin position="160"/>
        <end position="175"/>
    </location>
</feature>
<name>RACA_BACLD</name>
<accession>Q65DU9</accession>
<accession>Q62PC1</accession>
<comment type="function">
    <text evidence="1">Required for the formation of axial filaments and for anchoring the origin regions at the cell poles in sporulating cells, thus ensuring proper chromosome segregation in the prespore. Binds in a dispersed manner throughout the chromosome but preferentially to sites clustered in the origin portion of the chromosome, causing condensation of the chromosome and its remodeling into an elongated, anchored structure.</text>
</comment>
<comment type="subcellular location">
    <subcellularLocation>
        <location evidence="1">Cytoplasm</location>
    </subcellularLocation>
    <text evidence="1">Localizes to cell poles and nucleoid.</text>
</comment>
<comment type="similarity">
    <text evidence="1">Belongs to the RacA family.</text>
</comment>
<gene>
    <name evidence="1" type="primary">racA</name>
    <name type="ordered locus">BLi03951</name>
    <name type="ordered locus">BL04032</name>
</gene>
<reference key="1">
    <citation type="journal article" date="2004" name="J. Mol. Microbiol. Biotechnol.">
        <title>The complete genome sequence of Bacillus licheniformis DSM13, an organism with great industrial potential.</title>
        <authorList>
            <person name="Veith B."/>
            <person name="Herzberg C."/>
            <person name="Steckel S."/>
            <person name="Feesche J."/>
            <person name="Maurer K.H."/>
            <person name="Ehrenreich P."/>
            <person name="Baeumer S."/>
            <person name="Henne A."/>
            <person name="Liesegang H."/>
            <person name="Merkl R."/>
            <person name="Ehrenreich A."/>
            <person name="Gottschalk G."/>
        </authorList>
    </citation>
    <scope>NUCLEOTIDE SEQUENCE [LARGE SCALE GENOMIC DNA]</scope>
    <source>
        <strain>ATCC 14580 / DSM 13 / JCM 2505 / CCUG 7422 / NBRC 12200 / NCIMB 9375 / NCTC 10341 / NRRL NRS-1264 / Gibson 46</strain>
    </source>
</reference>
<reference key="2">
    <citation type="journal article" date="2004" name="Genome Biol.">
        <title>Complete genome sequence of the industrial bacterium Bacillus licheniformis and comparisons with closely related Bacillus species.</title>
        <authorList>
            <person name="Rey M.W."/>
            <person name="Ramaiya P."/>
            <person name="Nelson B.A."/>
            <person name="Brody-Karpin S.D."/>
            <person name="Zaretsky E.J."/>
            <person name="Tang M."/>
            <person name="Lopez de Leon A."/>
            <person name="Xiang H."/>
            <person name="Gusti V."/>
            <person name="Clausen I.G."/>
            <person name="Olsen P.B."/>
            <person name="Rasmussen M.D."/>
            <person name="Andersen J.T."/>
            <person name="Joergensen P.L."/>
            <person name="Larsen T.S."/>
            <person name="Sorokin A."/>
            <person name="Bolotin A."/>
            <person name="Lapidus A."/>
            <person name="Galleron N."/>
            <person name="Ehrlich S.D."/>
            <person name="Berka R.M."/>
        </authorList>
    </citation>
    <scope>NUCLEOTIDE SEQUENCE [LARGE SCALE GENOMIC DNA]</scope>
    <source>
        <strain>ATCC 14580 / DSM 13 / JCM 2505 / CCUG 7422 / NBRC 12200 / NCIMB 9375 / NCTC 10341 / NRRL NRS-1264 / Gibson 46</strain>
    </source>
</reference>